<evidence type="ECO:0000250" key="1"/>
<evidence type="ECO:0000256" key="2">
    <source>
        <dbReference type="SAM" id="MobiDB-lite"/>
    </source>
</evidence>
<evidence type="ECO:0000305" key="3"/>
<protein>
    <recommendedName>
        <fullName>RNA exonuclease 4</fullName>
        <ecNumber>3.1.-.-</ecNumber>
    </recommendedName>
</protein>
<accession>Q4PER6</accession>
<accession>A0A0D1E7N9</accession>
<gene>
    <name type="primary">REX4</name>
    <name type="ORF">UMAG_01397</name>
</gene>
<keyword id="KW-0269">Exonuclease</keyword>
<keyword id="KW-0378">Hydrolase</keyword>
<keyword id="KW-0540">Nuclease</keyword>
<keyword id="KW-0539">Nucleus</keyword>
<keyword id="KW-1185">Reference proteome</keyword>
<keyword id="KW-0698">rRNA processing</keyword>
<proteinExistence type="inferred from homology"/>
<feature type="chain" id="PRO_0000131700" description="RNA exonuclease 4">
    <location>
        <begin position="1"/>
        <end position="375"/>
    </location>
</feature>
<feature type="domain" description="Exonuclease">
    <location>
        <begin position="134"/>
        <end position="297"/>
    </location>
</feature>
<feature type="region of interest" description="Disordered" evidence="2">
    <location>
        <begin position="21"/>
        <end position="78"/>
    </location>
</feature>
<feature type="compositionally biased region" description="Low complexity" evidence="2">
    <location>
        <begin position="25"/>
        <end position="35"/>
    </location>
</feature>
<feature type="compositionally biased region" description="Basic and acidic residues" evidence="2">
    <location>
        <begin position="53"/>
        <end position="64"/>
    </location>
</feature>
<name>REXO4_MYCMD</name>
<dbReference type="EC" id="3.1.-.-"/>
<dbReference type="EMBL" id="CM003141">
    <property type="protein sequence ID" value="KIS71501.1"/>
    <property type="molecule type" value="Genomic_DNA"/>
</dbReference>
<dbReference type="RefSeq" id="XP_011387279.1">
    <property type="nucleotide sequence ID" value="XM_011388977.1"/>
</dbReference>
<dbReference type="SMR" id="Q4PER6"/>
<dbReference type="STRING" id="237631.Q4PER6"/>
<dbReference type="EnsemblFungi" id="KIS71501">
    <property type="protein sequence ID" value="KIS71501"/>
    <property type="gene ID" value="UMAG_01397"/>
</dbReference>
<dbReference type="GeneID" id="23562435"/>
<dbReference type="KEGG" id="uma:UMAG_01397"/>
<dbReference type="VEuPathDB" id="FungiDB:UMAG_01397"/>
<dbReference type="eggNOG" id="KOG2249">
    <property type="taxonomic scope" value="Eukaryota"/>
</dbReference>
<dbReference type="HOGENOM" id="CLU_022453_6_1_1"/>
<dbReference type="InParanoid" id="Q4PER6"/>
<dbReference type="OMA" id="WFAEDIS"/>
<dbReference type="OrthoDB" id="8191639at2759"/>
<dbReference type="Proteomes" id="UP000000561">
    <property type="component" value="Chromosome 2"/>
</dbReference>
<dbReference type="GO" id="GO:0005634">
    <property type="term" value="C:nucleus"/>
    <property type="evidence" value="ECO:0000318"/>
    <property type="project" value="GO_Central"/>
</dbReference>
<dbReference type="GO" id="GO:0008408">
    <property type="term" value="F:3'-5' exonuclease activity"/>
    <property type="evidence" value="ECO:0007669"/>
    <property type="project" value="InterPro"/>
</dbReference>
<dbReference type="GO" id="GO:0004527">
    <property type="term" value="F:exonuclease activity"/>
    <property type="evidence" value="ECO:0000318"/>
    <property type="project" value="GO_Central"/>
</dbReference>
<dbReference type="GO" id="GO:0003676">
    <property type="term" value="F:nucleic acid binding"/>
    <property type="evidence" value="ECO:0007669"/>
    <property type="project" value="InterPro"/>
</dbReference>
<dbReference type="GO" id="GO:0006396">
    <property type="term" value="P:RNA processing"/>
    <property type="evidence" value="ECO:0000318"/>
    <property type="project" value="GO_Central"/>
</dbReference>
<dbReference type="GO" id="GO:0006364">
    <property type="term" value="P:rRNA processing"/>
    <property type="evidence" value="ECO:0007669"/>
    <property type="project" value="UniProtKB-KW"/>
</dbReference>
<dbReference type="CDD" id="cd06144">
    <property type="entry name" value="REX4_like"/>
    <property type="match status" value="1"/>
</dbReference>
<dbReference type="FunFam" id="3.30.420.10:FF:000007">
    <property type="entry name" value="Interferon-stimulated exonuclease gene 20"/>
    <property type="match status" value="1"/>
</dbReference>
<dbReference type="Gene3D" id="3.30.420.10">
    <property type="entry name" value="Ribonuclease H-like superfamily/Ribonuclease H"/>
    <property type="match status" value="1"/>
</dbReference>
<dbReference type="InterPro" id="IPR013520">
    <property type="entry name" value="Exonuclease_RNaseT/DNA_pol3"/>
</dbReference>
<dbReference type="InterPro" id="IPR037431">
    <property type="entry name" value="REX4_DEDDh_dom"/>
</dbReference>
<dbReference type="InterPro" id="IPR047021">
    <property type="entry name" value="REXO1/3/4-like"/>
</dbReference>
<dbReference type="InterPro" id="IPR012337">
    <property type="entry name" value="RNaseH-like_sf"/>
</dbReference>
<dbReference type="InterPro" id="IPR036397">
    <property type="entry name" value="RNaseH_sf"/>
</dbReference>
<dbReference type="PANTHER" id="PTHR12801:SF45">
    <property type="entry name" value="RNA EXONUCLEASE 4"/>
    <property type="match status" value="1"/>
</dbReference>
<dbReference type="PANTHER" id="PTHR12801">
    <property type="entry name" value="RNA EXONUCLEASE REXO1 / RECO3 FAMILY MEMBER-RELATED"/>
    <property type="match status" value="1"/>
</dbReference>
<dbReference type="Pfam" id="PF00929">
    <property type="entry name" value="RNase_T"/>
    <property type="match status" value="1"/>
</dbReference>
<dbReference type="SMART" id="SM00479">
    <property type="entry name" value="EXOIII"/>
    <property type="match status" value="1"/>
</dbReference>
<dbReference type="SUPFAM" id="SSF53098">
    <property type="entry name" value="Ribonuclease H-like"/>
    <property type="match status" value="1"/>
</dbReference>
<sequence>MKSAASSSSSSAGSNWKALKKTLGSDASSSSASSSTNNRRKLSTSESTKPKRTRLDAKEKDAEGSKSCSPAPTSLPWFAEDISPQDLELVRESASGKMARSGEWEGIVDAKLKKQIILGGLPSDASSAKKEPGNYLAIDCEMVGVGDKGSESILARVSIVNFHGATIYDQFVRPQEKVTDYRTWVSGVRPKDLKGAPSFSQVQGEVANLIKGKVLVGHAIQNDLKALLLSHPKVLIRDTATFQPLRDLAKTKYPSLKKLAKLVLGIDIQLEGESHSSVEDARATMAVFRSQKPKWDEMLRSQNKGGRGSLARLASRSSAANKVWKAPANGQAVDAASPALDKRSMLAFTSASAVHDTVRLKPRMAAKADWWKESM</sequence>
<organism>
    <name type="scientific">Mycosarcoma maydis</name>
    <name type="common">Corn smut fungus</name>
    <name type="synonym">Ustilago maydis</name>
    <dbReference type="NCBI Taxonomy" id="5270"/>
    <lineage>
        <taxon>Eukaryota</taxon>
        <taxon>Fungi</taxon>
        <taxon>Dikarya</taxon>
        <taxon>Basidiomycota</taxon>
        <taxon>Ustilaginomycotina</taxon>
        <taxon>Ustilaginomycetes</taxon>
        <taxon>Ustilaginales</taxon>
        <taxon>Ustilaginaceae</taxon>
        <taxon>Mycosarcoma</taxon>
    </lineage>
</organism>
<reference key="1">
    <citation type="journal article" date="2006" name="Nature">
        <title>Insights from the genome of the biotrophic fungal plant pathogen Ustilago maydis.</title>
        <authorList>
            <person name="Kaemper J."/>
            <person name="Kahmann R."/>
            <person name="Boelker M."/>
            <person name="Ma L.-J."/>
            <person name="Brefort T."/>
            <person name="Saville B.J."/>
            <person name="Banuett F."/>
            <person name="Kronstad J.W."/>
            <person name="Gold S.E."/>
            <person name="Mueller O."/>
            <person name="Perlin M.H."/>
            <person name="Woesten H.A.B."/>
            <person name="de Vries R."/>
            <person name="Ruiz-Herrera J."/>
            <person name="Reynaga-Pena C.G."/>
            <person name="Snetselaar K."/>
            <person name="McCann M."/>
            <person name="Perez-Martin J."/>
            <person name="Feldbruegge M."/>
            <person name="Basse C.W."/>
            <person name="Steinberg G."/>
            <person name="Ibeas J.I."/>
            <person name="Holloman W."/>
            <person name="Guzman P."/>
            <person name="Farman M.L."/>
            <person name="Stajich J.E."/>
            <person name="Sentandreu R."/>
            <person name="Gonzalez-Prieto J.M."/>
            <person name="Kennell J.C."/>
            <person name="Molina L."/>
            <person name="Schirawski J."/>
            <person name="Mendoza-Mendoza A."/>
            <person name="Greilinger D."/>
            <person name="Muench K."/>
            <person name="Roessel N."/>
            <person name="Scherer M."/>
            <person name="Vranes M."/>
            <person name="Ladendorf O."/>
            <person name="Vincon V."/>
            <person name="Fuchs U."/>
            <person name="Sandrock B."/>
            <person name="Meng S."/>
            <person name="Ho E.C.H."/>
            <person name="Cahill M.J."/>
            <person name="Boyce K.J."/>
            <person name="Klose J."/>
            <person name="Klosterman S.J."/>
            <person name="Deelstra H.J."/>
            <person name="Ortiz-Castellanos L."/>
            <person name="Li W."/>
            <person name="Sanchez-Alonso P."/>
            <person name="Schreier P.H."/>
            <person name="Haeuser-Hahn I."/>
            <person name="Vaupel M."/>
            <person name="Koopmann E."/>
            <person name="Friedrich G."/>
            <person name="Voss H."/>
            <person name="Schlueter T."/>
            <person name="Margolis J."/>
            <person name="Platt D."/>
            <person name="Swimmer C."/>
            <person name="Gnirke A."/>
            <person name="Chen F."/>
            <person name="Vysotskaia V."/>
            <person name="Mannhaupt G."/>
            <person name="Gueldener U."/>
            <person name="Muensterkoetter M."/>
            <person name="Haase D."/>
            <person name="Oesterheld M."/>
            <person name="Mewes H.-W."/>
            <person name="Mauceli E.W."/>
            <person name="DeCaprio D."/>
            <person name="Wade C.M."/>
            <person name="Butler J."/>
            <person name="Young S.K."/>
            <person name="Jaffe D.B."/>
            <person name="Calvo S.E."/>
            <person name="Nusbaum C."/>
            <person name="Galagan J.E."/>
            <person name="Birren B.W."/>
        </authorList>
    </citation>
    <scope>NUCLEOTIDE SEQUENCE [LARGE SCALE GENOMIC DNA]</scope>
    <source>
        <strain>DSM 14603 / FGSC 9021 / UM521</strain>
    </source>
</reference>
<reference key="2">
    <citation type="submission" date="2014-09" db="EMBL/GenBank/DDBJ databases">
        <authorList>
            <person name="Gueldener U."/>
            <person name="Muensterkoetter M."/>
            <person name="Walter M.C."/>
            <person name="Mannhaupt G."/>
            <person name="Kahmann R."/>
        </authorList>
    </citation>
    <scope>GENOME REANNOTATION</scope>
    <source>
        <strain>DSM 14603 / FGSC 9021 / UM521</strain>
    </source>
</reference>
<comment type="function">
    <text evidence="1">Exoribonuclease involved in ribosome biosynthesis. Involved in the processing of ITS1, the internal transcribed spacer localized between the 18S and 5.8S rRNAs (By similarity).</text>
</comment>
<comment type="subcellular location">
    <subcellularLocation>
        <location evidence="1">Nucleus</location>
    </subcellularLocation>
</comment>
<comment type="similarity">
    <text evidence="3">Belongs to the REXO4 family.</text>
</comment>